<organism>
    <name type="scientific">Staphylococcus aureus (strain USA300)</name>
    <dbReference type="NCBI Taxonomy" id="367830"/>
    <lineage>
        <taxon>Bacteria</taxon>
        <taxon>Bacillati</taxon>
        <taxon>Bacillota</taxon>
        <taxon>Bacilli</taxon>
        <taxon>Bacillales</taxon>
        <taxon>Staphylococcaceae</taxon>
        <taxon>Staphylococcus</taxon>
    </lineage>
</organism>
<name>RS7_STAA3</name>
<dbReference type="EMBL" id="CP000255">
    <property type="protein sequence ID" value="ABD21677.1"/>
    <property type="status" value="ALT_FRAME"/>
    <property type="molecule type" value="Genomic_DNA"/>
</dbReference>
<dbReference type="RefSeq" id="WP_001137495.1">
    <property type="nucleotide sequence ID" value="NZ_CP027476.1"/>
</dbReference>
<dbReference type="SMR" id="Q2FJ94"/>
<dbReference type="GeneID" id="98344880"/>
<dbReference type="KEGG" id="saa:SAUSA300_0531"/>
<dbReference type="HOGENOM" id="CLU_072226_1_1_9"/>
<dbReference type="OMA" id="DDTHRMA"/>
<dbReference type="Proteomes" id="UP000001939">
    <property type="component" value="Chromosome"/>
</dbReference>
<dbReference type="GO" id="GO:0015935">
    <property type="term" value="C:small ribosomal subunit"/>
    <property type="evidence" value="ECO:0007669"/>
    <property type="project" value="InterPro"/>
</dbReference>
<dbReference type="GO" id="GO:0019843">
    <property type="term" value="F:rRNA binding"/>
    <property type="evidence" value="ECO:0007669"/>
    <property type="project" value="UniProtKB-UniRule"/>
</dbReference>
<dbReference type="GO" id="GO:0003735">
    <property type="term" value="F:structural constituent of ribosome"/>
    <property type="evidence" value="ECO:0007669"/>
    <property type="project" value="InterPro"/>
</dbReference>
<dbReference type="GO" id="GO:0000049">
    <property type="term" value="F:tRNA binding"/>
    <property type="evidence" value="ECO:0007669"/>
    <property type="project" value="UniProtKB-UniRule"/>
</dbReference>
<dbReference type="GO" id="GO:0006412">
    <property type="term" value="P:translation"/>
    <property type="evidence" value="ECO:0007669"/>
    <property type="project" value="UniProtKB-UniRule"/>
</dbReference>
<dbReference type="CDD" id="cd14869">
    <property type="entry name" value="uS7_Bacteria"/>
    <property type="match status" value="1"/>
</dbReference>
<dbReference type="FunFam" id="1.10.455.10:FF:000001">
    <property type="entry name" value="30S ribosomal protein S7"/>
    <property type="match status" value="1"/>
</dbReference>
<dbReference type="Gene3D" id="1.10.455.10">
    <property type="entry name" value="Ribosomal protein S7 domain"/>
    <property type="match status" value="1"/>
</dbReference>
<dbReference type="HAMAP" id="MF_00480_B">
    <property type="entry name" value="Ribosomal_uS7_B"/>
    <property type="match status" value="1"/>
</dbReference>
<dbReference type="InterPro" id="IPR000235">
    <property type="entry name" value="Ribosomal_uS7"/>
</dbReference>
<dbReference type="InterPro" id="IPR005717">
    <property type="entry name" value="Ribosomal_uS7_bac/org-type"/>
</dbReference>
<dbReference type="InterPro" id="IPR020606">
    <property type="entry name" value="Ribosomal_uS7_CS"/>
</dbReference>
<dbReference type="InterPro" id="IPR023798">
    <property type="entry name" value="Ribosomal_uS7_dom"/>
</dbReference>
<dbReference type="InterPro" id="IPR036823">
    <property type="entry name" value="Ribosomal_uS7_dom_sf"/>
</dbReference>
<dbReference type="NCBIfam" id="TIGR01029">
    <property type="entry name" value="rpsG_bact"/>
    <property type="match status" value="1"/>
</dbReference>
<dbReference type="PANTHER" id="PTHR11205">
    <property type="entry name" value="RIBOSOMAL PROTEIN S7"/>
    <property type="match status" value="1"/>
</dbReference>
<dbReference type="Pfam" id="PF00177">
    <property type="entry name" value="Ribosomal_S7"/>
    <property type="match status" value="1"/>
</dbReference>
<dbReference type="PIRSF" id="PIRSF002122">
    <property type="entry name" value="RPS7p_RPS7a_RPS5e_RPS7o"/>
    <property type="match status" value="1"/>
</dbReference>
<dbReference type="SUPFAM" id="SSF47973">
    <property type="entry name" value="Ribosomal protein S7"/>
    <property type="match status" value="1"/>
</dbReference>
<dbReference type="PROSITE" id="PS00052">
    <property type="entry name" value="RIBOSOMAL_S7"/>
    <property type="match status" value="1"/>
</dbReference>
<reference key="1">
    <citation type="journal article" date="2006" name="Lancet">
        <title>Complete genome sequence of USA300, an epidemic clone of community-acquired meticillin-resistant Staphylococcus aureus.</title>
        <authorList>
            <person name="Diep B.A."/>
            <person name="Gill S.R."/>
            <person name="Chang R.F."/>
            <person name="Phan T.H."/>
            <person name="Chen J.H."/>
            <person name="Davidson M.G."/>
            <person name="Lin F."/>
            <person name="Lin J."/>
            <person name="Carleton H.A."/>
            <person name="Mongodin E.F."/>
            <person name="Sensabaugh G.F."/>
            <person name="Perdreau-Remington F."/>
        </authorList>
    </citation>
    <scope>NUCLEOTIDE SEQUENCE [LARGE SCALE GENOMIC DNA]</scope>
    <source>
        <strain>USA300</strain>
    </source>
</reference>
<proteinExistence type="inferred from homology"/>
<feature type="chain" id="PRO_0000241778" description="Small ribosomal subunit protein uS7">
    <location>
        <begin position="1"/>
        <end position="156"/>
    </location>
</feature>
<evidence type="ECO:0000255" key="1">
    <source>
        <dbReference type="HAMAP-Rule" id="MF_00480"/>
    </source>
</evidence>
<evidence type="ECO:0000305" key="2"/>
<gene>
    <name evidence="1" type="primary">rpsG</name>
    <name type="ordered locus">SAUSA300_0531</name>
</gene>
<protein>
    <recommendedName>
        <fullName evidence="1">Small ribosomal subunit protein uS7</fullName>
    </recommendedName>
    <alternativeName>
        <fullName evidence="2">30S ribosomal protein S7</fullName>
    </alternativeName>
</protein>
<keyword id="KW-0687">Ribonucleoprotein</keyword>
<keyword id="KW-0689">Ribosomal protein</keyword>
<keyword id="KW-0694">RNA-binding</keyword>
<keyword id="KW-0699">rRNA-binding</keyword>
<keyword id="KW-0820">tRNA-binding</keyword>
<accession>Q2FJ94</accession>
<sequence>MPRKGSVPKRDVLPDPIHNSKLVTKLINKIMLDGKRGTAQRILYSAFDLVEQRSGRDALEVFEEAINNIMPVLEVKARRVGGSNYQVPVEVRPERRTTLGLRWLVNYARLRGEKTMEDRLANEILDAANNTGGAVKKREDTHKMAEANKAFAHYRW</sequence>
<comment type="function">
    <text evidence="1">One of the primary rRNA binding proteins, it binds directly to 16S rRNA where it nucleates assembly of the head domain of the 30S subunit. Is located at the subunit interface close to the decoding center, probably blocks exit of the E-site tRNA.</text>
</comment>
<comment type="subunit">
    <text evidence="1">Part of the 30S ribosomal subunit. Contacts proteins S9 and S11.</text>
</comment>
<comment type="similarity">
    <text evidence="1">Belongs to the universal ribosomal protein uS7 family.</text>
</comment>
<comment type="sequence caution" evidence="2">
    <conflict type="frameshift">
        <sequence resource="EMBL-CDS" id="ABD21677"/>
    </conflict>
</comment>